<sequence length="145" mass="16270">MGFSETQEELVLRSWQSMKKDSESIALKFFLRIFEIAPAAKQMFSFLRDSGDDVPLENHPKACESATQLRKTGDVKVREATLRRLGATHVKAGVADAYFEVVKTALLDTIKDAVPEMWSPEMKGAWEEAYDQLAAAIKEEMKKAA</sequence>
<comment type="function">
    <text evidence="2 4">Phytoglobin that reduces nitrite to nitric oxide under anoxic conditions (e.g. during flooding or in waterlogged soil) (By similarity). May not function as an oxygen storage or transport protein (By similarity). Has an unusually high affinity for O(2) through an hexacoordinate heme iron because of a very low dissociation constant (By similarity).</text>
</comment>
<comment type="catalytic activity">
    <reaction evidence="2">
        <text>Fe(III)-heme b-[protein] + nitric oxide + H2O = Fe(II)-heme b-[protein] + nitrite + 2 H(+)</text>
        <dbReference type="Rhea" id="RHEA:77711"/>
        <dbReference type="Rhea" id="RHEA-COMP:18975"/>
        <dbReference type="Rhea" id="RHEA-COMP:18976"/>
        <dbReference type="ChEBI" id="CHEBI:15377"/>
        <dbReference type="ChEBI" id="CHEBI:15378"/>
        <dbReference type="ChEBI" id="CHEBI:16301"/>
        <dbReference type="ChEBI" id="CHEBI:16480"/>
        <dbReference type="ChEBI" id="CHEBI:55376"/>
        <dbReference type="ChEBI" id="CHEBI:60344"/>
    </reaction>
    <physiologicalReaction direction="right-to-left" evidence="2">
        <dbReference type="Rhea" id="RHEA:77713"/>
    </physiologicalReaction>
</comment>
<comment type="cofactor">
    <cofactor evidence="3">
        <name>heme b</name>
        <dbReference type="ChEBI" id="CHEBI:60344"/>
    </cofactor>
    <text evidence="3">Binds 1 heme group per subunit.</text>
</comment>
<comment type="subunit">
    <text evidence="2">Homodimer.</text>
</comment>
<comment type="subcellular location">
    <subcellularLocation>
        <location evidence="1">Cytoplasm</location>
    </subcellularLocation>
    <subcellularLocation>
        <location evidence="1">Nucleus</location>
    </subcellularLocation>
</comment>
<comment type="tissue specificity">
    <text evidence="6">Expressed in embryonic (embryos, coleoptiles and seminal roots) and vegetative (leaves and roots) organs.</text>
</comment>
<comment type="similarity">
    <text evidence="7">Belongs to the plant globin family.</text>
</comment>
<comment type="sequence caution" evidence="7">
    <conflict type="erroneous initiation">
        <sequence resource="EMBL-CDS" id="EEE64373"/>
    </conflict>
    <text>Truncated N-terminus.</text>
</comment>
<proteinExistence type="evidence at transcript level"/>
<keyword id="KW-0963">Cytoplasm</keyword>
<keyword id="KW-0349">Heme</keyword>
<keyword id="KW-0408">Iron</keyword>
<keyword id="KW-0479">Metal-binding</keyword>
<keyword id="KW-0539">Nucleus</keyword>
<keyword id="KW-0560">Oxidoreductase</keyword>
<keyword id="KW-0561">Oxygen transport</keyword>
<keyword id="KW-1185">Reference proteome</keyword>
<keyword id="KW-0813">Transport</keyword>
<name>NSHB5_ORYSJ</name>
<dbReference type="EC" id="1.7.2.-" evidence="2"/>
<dbReference type="EMBL" id="AP014961">
    <property type="protein sequence ID" value="BAS94902.1"/>
    <property type="molecule type" value="Genomic_DNA"/>
</dbReference>
<dbReference type="EMBL" id="CM000142">
    <property type="protein sequence ID" value="EEE64373.1"/>
    <property type="status" value="ALT_INIT"/>
    <property type="molecule type" value="Genomic_DNA"/>
</dbReference>
<dbReference type="SMR" id="Q75II4"/>
<dbReference type="FunCoup" id="Q75II4">
    <property type="interactions" value="1030"/>
</dbReference>
<dbReference type="STRING" id="4530.OS05T0517600-00"/>
<dbReference type="PaxDb" id="39947-Q75II4"/>
<dbReference type="EnsemblPlants" id="Os05t0517600-01">
    <property type="protein sequence ID" value="Os05t0517600-01"/>
    <property type="gene ID" value="Os05g0517600"/>
</dbReference>
<dbReference type="Gramene" id="Os05t0517600-01">
    <property type="protein sequence ID" value="Os05t0517600-01"/>
    <property type="gene ID" value="Os05g0517600"/>
</dbReference>
<dbReference type="eggNOG" id="KOG3378">
    <property type="taxonomic scope" value="Eukaryota"/>
</dbReference>
<dbReference type="HOGENOM" id="CLU_003827_11_2_1"/>
<dbReference type="InParanoid" id="Q75II4"/>
<dbReference type="OMA" id="GAKQMFP"/>
<dbReference type="Proteomes" id="UP000007752">
    <property type="component" value="Chromosome 5"/>
</dbReference>
<dbReference type="Proteomes" id="UP000059680">
    <property type="component" value="Chromosome 5"/>
</dbReference>
<dbReference type="GO" id="GO:0005737">
    <property type="term" value="C:cytoplasm"/>
    <property type="evidence" value="ECO:0000250"/>
    <property type="project" value="UniProtKB"/>
</dbReference>
<dbReference type="GO" id="GO:0005634">
    <property type="term" value="C:nucleus"/>
    <property type="evidence" value="ECO:0000250"/>
    <property type="project" value="UniProtKB"/>
</dbReference>
<dbReference type="GO" id="GO:0020037">
    <property type="term" value="F:heme binding"/>
    <property type="evidence" value="ECO:0007669"/>
    <property type="project" value="InterPro"/>
</dbReference>
<dbReference type="GO" id="GO:0046872">
    <property type="term" value="F:metal ion binding"/>
    <property type="evidence" value="ECO:0007669"/>
    <property type="project" value="UniProtKB-KW"/>
</dbReference>
<dbReference type="GO" id="GO:0016491">
    <property type="term" value="F:oxidoreductase activity"/>
    <property type="evidence" value="ECO:0007669"/>
    <property type="project" value="UniProtKB-KW"/>
</dbReference>
<dbReference type="GO" id="GO:0019825">
    <property type="term" value="F:oxygen binding"/>
    <property type="evidence" value="ECO:0007669"/>
    <property type="project" value="InterPro"/>
</dbReference>
<dbReference type="GO" id="GO:0005344">
    <property type="term" value="F:oxygen carrier activity"/>
    <property type="evidence" value="ECO:0007669"/>
    <property type="project" value="UniProtKB-KW"/>
</dbReference>
<dbReference type="Gene3D" id="1.10.490.10">
    <property type="entry name" value="Globins"/>
    <property type="match status" value="1"/>
</dbReference>
<dbReference type="InterPro" id="IPR000971">
    <property type="entry name" value="Globin"/>
</dbReference>
<dbReference type="InterPro" id="IPR009050">
    <property type="entry name" value="Globin-like_sf"/>
</dbReference>
<dbReference type="InterPro" id="IPR012292">
    <property type="entry name" value="Globin/Proto"/>
</dbReference>
<dbReference type="InterPro" id="IPR001032">
    <property type="entry name" value="Leghaemoglobin-like"/>
</dbReference>
<dbReference type="PANTHER" id="PTHR22924">
    <property type="entry name" value="LEGHEMOGLOBIN-RELATED"/>
    <property type="match status" value="1"/>
</dbReference>
<dbReference type="PANTHER" id="PTHR22924:SF95">
    <property type="entry name" value="OS05G0517600 PROTEIN"/>
    <property type="match status" value="1"/>
</dbReference>
<dbReference type="Pfam" id="PF00042">
    <property type="entry name" value="Globin"/>
    <property type="match status" value="1"/>
</dbReference>
<dbReference type="PRINTS" id="PR00188">
    <property type="entry name" value="PLANTGLOBIN"/>
</dbReference>
<dbReference type="SUPFAM" id="SSF46458">
    <property type="entry name" value="Globin-like"/>
    <property type="match status" value="1"/>
</dbReference>
<dbReference type="PROSITE" id="PS01033">
    <property type="entry name" value="GLOBIN"/>
    <property type="match status" value="1"/>
</dbReference>
<organism>
    <name type="scientific">Oryza sativa subsp. japonica</name>
    <name type="common">Rice</name>
    <dbReference type="NCBI Taxonomy" id="39947"/>
    <lineage>
        <taxon>Eukaryota</taxon>
        <taxon>Viridiplantae</taxon>
        <taxon>Streptophyta</taxon>
        <taxon>Embryophyta</taxon>
        <taxon>Tracheophyta</taxon>
        <taxon>Spermatophyta</taxon>
        <taxon>Magnoliopsida</taxon>
        <taxon>Liliopsida</taxon>
        <taxon>Poales</taxon>
        <taxon>Poaceae</taxon>
        <taxon>BOP clade</taxon>
        <taxon>Oryzoideae</taxon>
        <taxon>Oryzeae</taxon>
        <taxon>Oryzinae</taxon>
        <taxon>Oryza</taxon>
        <taxon>Oryza sativa</taxon>
    </lineage>
</organism>
<protein>
    <recommendedName>
        <fullName evidence="7">Anaerobic nitrite reductase NSHB5</fullName>
        <ecNumber evidence="2">1.7.2.-</ecNumber>
    </recommendedName>
    <alternativeName>
        <fullName evidence="7">Non-symbiotic hemoglobin 5</fullName>
        <shortName evidence="7">OsNSHB5</shortName>
        <shortName evidence="7">rHb5</shortName>
    </alternativeName>
    <alternativeName>
        <fullName evidence="7">ORYsa GLB1e</fullName>
    </alternativeName>
    <alternativeName>
        <fullName evidence="7">Phytoglobin 1.5</fullName>
        <shortName evidence="7">OsPgb1.5</shortName>
        <shortName evidence="7">Phytogb1.5</shortName>
    </alternativeName>
    <alternativeName>
        <fullName evidence="7">Symbiotic-like hemoglobin 5</fullName>
    </alternativeName>
</protein>
<accession>Q75II4</accession>
<accession>B9FGT0</accession>
<reference key="1">
    <citation type="journal article" date="2005" name="Nature">
        <title>The map-based sequence of the rice genome.</title>
        <authorList>
            <consortium name="International rice genome sequencing project (IRGSP)"/>
        </authorList>
    </citation>
    <scope>NUCLEOTIDE SEQUENCE [LARGE SCALE GENOMIC DNA]</scope>
    <source>
        <strain>cv. Nipponbare</strain>
    </source>
</reference>
<reference key="2">
    <citation type="journal article" date="2013" name="Rice">
        <title>Improvement of the Oryza sativa Nipponbare reference genome using next generation sequence and optical map data.</title>
        <authorList>
            <person name="Kawahara Y."/>
            <person name="de la Bastide M."/>
            <person name="Hamilton J.P."/>
            <person name="Kanamori H."/>
            <person name="McCombie W.R."/>
            <person name="Ouyang S."/>
            <person name="Schwartz D.C."/>
            <person name="Tanaka T."/>
            <person name="Wu J."/>
            <person name="Zhou S."/>
            <person name="Childs K.L."/>
            <person name="Davidson R.M."/>
            <person name="Lin H."/>
            <person name="Quesada-Ocampo L."/>
            <person name="Vaillancourt B."/>
            <person name="Sakai H."/>
            <person name="Lee S.S."/>
            <person name="Kim J."/>
            <person name="Numa H."/>
            <person name="Itoh T."/>
            <person name="Buell C.R."/>
            <person name="Matsumoto T."/>
        </authorList>
    </citation>
    <scope>GENOME REANNOTATION</scope>
    <source>
        <strain>cv. Nipponbare</strain>
    </source>
</reference>
<reference key="3">
    <citation type="journal article" date="2005" name="PLoS Biol.">
        <title>The genomes of Oryza sativa: a history of duplications.</title>
        <authorList>
            <person name="Yu J."/>
            <person name="Wang J."/>
            <person name="Lin W."/>
            <person name="Li S."/>
            <person name="Li H."/>
            <person name="Zhou J."/>
            <person name="Ni P."/>
            <person name="Dong W."/>
            <person name="Hu S."/>
            <person name="Zeng C."/>
            <person name="Zhang J."/>
            <person name="Zhang Y."/>
            <person name="Li R."/>
            <person name="Xu Z."/>
            <person name="Li S."/>
            <person name="Li X."/>
            <person name="Zheng H."/>
            <person name="Cong L."/>
            <person name="Lin L."/>
            <person name="Yin J."/>
            <person name="Geng J."/>
            <person name="Li G."/>
            <person name="Shi J."/>
            <person name="Liu J."/>
            <person name="Lv H."/>
            <person name="Li J."/>
            <person name="Wang J."/>
            <person name="Deng Y."/>
            <person name="Ran L."/>
            <person name="Shi X."/>
            <person name="Wang X."/>
            <person name="Wu Q."/>
            <person name="Li C."/>
            <person name="Ren X."/>
            <person name="Wang J."/>
            <person name="Wang X."/>
            <person name="Li D."/>
            <person name="Liu D."/>
            <person name="Zhang X."/>
            <person name="Ji Z."/>
            <person name="Zhao W."/>
            <person name="Sun Y."/>
            <person name="Zhang Z."/>
            <person name="Bao J."/>
            <person name="Han Y."/>
            <person name="Dong L."/>
            <person name="Ji J."/>
            <person name="Chen P."/>
            <person name="Wu S."/>
            <person name="Liu J."/>
            <person name="Xiao Y."/>
            <person name="Bu D."/>
            <person name="Tan J."/>
            <person name="Yang L."/>
            <person name="Ye C."/>
            <person name="Zhang J."/>
            <person name="Xu J."/>
            <person name="Zhou Y."/>
            <person name="Yu Y."/>
            <person name="Zhang B."/>
            <person name="Zhuang S."/>
            <person name="Wei H."/>
            <person name="Liu B."/>
            <person name="Lei M."/>
            <person name="Yu H."/>
            <person name="Li Y."/>
            <person name="Xu H."/>
            <person name="Wei S."/>
            <person name="He X."/>
            <person name="Fang L."/>
            <person name="Zhang Z."/>
            <person name="Zhang Y."/>
            <person name="Huang X."/>
            <person name="Su Z."/>
            <person name="Tong W."/>
            <person name="Li J."/>
            <person name="Tong Z."/>
            <person name="Li S."/>
            <person name="Ye J."/>
            <person name="Wang L."/>
            <person name="Fang L."/>
            <person name="Lei T."/>
            <person name="Chen C.-S."/>
            <person name="Chen H.-C."/>
            <person name="Xu Z."/>
            <person name="Li H."/>
            <person name="Huang H."/>
            <person name="Zhang F."/>
            <person name="Xu H."/>
            <person name="Li N."/>
            <person name="Zhao C."/>
            <person name="Li S."/>
            <person name="Dong L."/>
            <person name="Huang Y."/>
            <person name="Li L."/>
            <person name="Xi Y."/>
            <person name="Qi Q."/>
            <person name="Li W."/>
            <person name="Zhang B."/>
            <person name="Hu W."/>
            <person name="Zhang Y."/>
            <person name="Tian X."/>
            <person name="Jiao Y."/>
            <person name="Liang X."/>
            <person name="Jin J."/>
            <person name="Gao L."/>
            <person name="Zheng W."/>
            <person name="Hao B."/>
            <person name="Liu S.-M."/>
            <person name="Wang W."/>
            <person name="Yuan L."/>
            <person name="Cao M."/>
            <person name="McDermott J."/>
            <person name="Samudrala R."/>
            <person name="Wang J."/>
            <person name="Wong G.K.-S."/>
            <person name="Yang H."/>
        </authorList>
    </citation>
    <scope>NUCLEOTIDE SEQUENCE [LARGE SCALE GENOMIC DNA]</scope>
    <source>
        <strain>cv. Nipponbare</strain>
    </source>
</reference>
<reference key="4">
    <citation type="journal article" date="2008" name="Plant Physiol. Biochem.">
        <title>Expression and in silico structural analysis of a rice (Oryza sativa) hemoglobin 5.</title>
        <authorList>
            <person name="Garrocho-Villegas V."/>
            <person name="Bustos-Rivera G."/>
            <person name="Gough J."/>
            <person name="Vinogradov S.N."/>
            <person name="Arredondo-Peter R."/>
        </authorList>
    </citation>
    <scope>TISSUE SPECIFICITY</scope>
    <scope>GENE FAMILY</scope>
    <source>
        <strain>cv. Morelos</strain>
    </source>
</reference>
<gene>
    <name evidence="7" type="primary">NSHB5</name>
    <name evidence="7" type="synonym">GLB1E</name>
    <name evidence="7" type="synonym">HB5</name>
    <name evidence="7" type="synonym">Pgb1.5</name>
    <name evidence="7" type="ordered locus">LOC_Os05g44140</name>
    <name evidence="7" type="ordered locus">Os05g0517600</name>
    <name evidence="9" type="ORF">OsJ_19215</name>
    <name evidence="8" type="ORF">OSNPB_050517600</name>
</gene>
<feature type="chain" id="PRO_0000459739" description="Anaerobic nitrite reductase NSHB5">
    <location>
        <begin position="1"/>
        <end position="145"/>
    </location>
</feature>
<feature type="domain" description="Globin" evidence="5">
    <location>
        <begin position="2"/>
        <end position="142"/>
    </location>
</feature>
<feature type="short sequence motif" description="Homodimerization" evidence="2">
    <location>
        <begin position="35"/>
        <end position="39"/>
    </location>
</feature>
<feature type="short sequence motif" description="Homodimerization" evidence="2">
    <location>
        <begin position="96"/>
        <end position="108"/>
    </location>
</feature>
<feature type="binding site" evidence="3">
    <location>
        <position position="45"/>
    </location>
    <ligand>
        <name>heme b</name>
        <dbReference type="ChEBI" id="CHEBI:60344"/>
    </ligand>
</feature>
<feature type="binding site" description="distal binding residue" evidence="5">
    <location>
        <position position="59"/>
    </location>
    <ligand>
        <name>heme b</name>
        <dbReference type="ChEBI" id="CHEBI:60344"/>
    </ligand>
    <ligandPart>
        <name>Fe</name>
        <dbReference type="ChEBI" id="CHEBI:18248"/>
    </ligandPart>
</feature>
<feature type="binding site" evidence="2">
    <location>
        <position position="61"/>
    </location>
    <ligand>
        <name>heme b</name>
        <dbReference type="ChEBI" id="CHEBI:60344"/>
    </ligand>
</feature>
<feature type="binding site" evidence="2">
    <location>
        <position position="84"/>
    </location>
    <ligand>
        <name>heme b</name>
        <dbReference type="ChEBI" id="CHEBI:60344"/>
    </ligand>
</feature>
<feature type="binding site" evidence="2">
    <location>
        <position position="88"/>
    </location>
    <ligand>
        <name>heme b</name>
        <dbReference type="ChEBI" id="CHEBI:60344"/>
    </ligand>
</feature>
<feature type="binding site" description="proximal binding residue" evidence="5">
    <location>
        <position position="89"/>
    </location>
    <ligand>
        <name>heme b</name>
        <dbReference type="ChEBI" id="CHEBI:60344"/>
    </ligand>
    <ligandPart>
        <name>Fe</name>
        <dbReference type="ChEBI" id="CHEBI:18248"/>
    </ligandPart>
</feature>
<feature type="site" description="Homodimerization" evidence="2">
    <location>
        <position position="123"/>
    </location>
</feature>
<evidence type="ECO:0000250" key="1">
    <source>
        <dbReference type="UniProtKB" id="A2XE98"/>
    </source>
</evidence>
<evidence type="ECO:0000250" key="2">
    <source>
        <dbReference type="UniProtKB" id="O04986"/>
    </source>
</evidence>
<evidence type="ECO:0000250" key="3">
    <source>
        <dbReference type="UniProtKB" id="P68168"/>
    </source>
</evidence>
<evidence type="ECO:0000250" key="4">
    <source>
        <dbReference type="UniProtKB" id="Q42831"/>
    </source>
</evidence>
<evidence type="ECO:0000255" key="5">
    <source>
        <dbReference type="PROSITE-ProRule" id="PRU00238"/>
    </source>
</evidence>
<evidence type="ECO:0000269" key="6">
    <source>
    </source>
</evidence>
<evidence type="ECO:0000305" key="7"/>
<evidence type="ECO:0000312" key="8">
    <source>
        <dbReference type="EMBL" id="BAS94902.1"/>
    </source>
</evidence>
<evidence type="ECO:0000312" key="9">
    <source>
        <dbReference type="EMBL" id="EEE64373.1"/>
    </source>
</evidence>